<feature type="chain" id="PRO_0000064907" description="Brain-enriched guanylate kinase-associated protein">
    <location>
        <begin position="1"/>
        <end position="653"/>
    </location>
</feature>
<feature type="region of interest" description="Disordered" evidence="4">
    <location>
        <begin position="241"/>
        <end position="271"/>
    </location>
</feature>
<feature type="region of interest" description="Disordered" evidence="4">
    <location>
        <begin position="288"/>
        <end position="329"/>
    </location>
</feature>
<feature type="region of interest" description="Disordered" evidence="4">
    <location>
        <begin position="587"/>
        <end position="653"/>
    </location>
</feature>
<feature type="compositionally biased region" description="Polar residues" evidence="4">
    <location>
        <begin position="243"/>
        <end position="252"/>
    </location>
</feature>
<feature type="compositionally biased region" description="Acidic residues" evidence="4">
    <location>
        <begin position="315"/>
        <end position="327"/>
    </location>
</feature>
<feature type="modified residue" description="Phosphotyrosine" evidence="2">
    <location>
        <position position="186"/>
    </location>
</feature>
<feature type="modified residue" description="Phosphoserine" evidence="3">
    <location>
        <position position="249"/>
    </location>
</feature>
<feature type="modified residue" description="Phosphoserine" evidence="2">
    <location>
        <position position="278"/>
    </location>
</feature>
<feature type="modified residue" description="Phosphoserine" evidence="3">
    <location>
        <position position="295"/>
    </location>
</feature>
<feature type="modified residue" description="Phosphoserine" evidence="2">
    <location>
        <position position="314"/>
    </location>
</feature>
<feature type="modified residue" description="Phosphoserine" evidence="3">
    <location>
        <position position="400"/>
    </location>
</feature>
<feature type="modified residue" description="Phosphoserine" evidence="3">
    <location>
        <position position="427"/>
    </location>
</feature>
<feature type="modified residue" description="Asymmetric dimethylarginine" evidence="2">
    <location>
        <position position="435"/>
    </location>
</feature>
<feature type="modified residue" description="Phosphoserine" evidence="3">
    <location>
        <position position="523"/>
    </location>
</feature>
<feature type="modified residue" description="Phosphoserine" evidence="2">
    <location>
        <position position="533"/>
    </location>
</feature>
<feature type="modified residue" description="Phosphoserine" evidence="2">
    <location>
        <position position="535"/>
    </location>
</feature>
<feature type="modified residue" description="Phosphoserine" evidence="3">
    <location>
        <position position="558"/>
    </location>
</feature>
<feature type="modified residue" description="Phosphoserine" evidence="3">
    <location>
        <position position="560"/>
    </location>
</feature>
<feature type="modified residue" description="Phosphoserine" evidence="3">
    <location>
        <position position="564"/>
    </location>
</feature>
<feature type="modified residue" description="Phosphoserine" evidence="3">
    <location>
        <position position="613"/>
    </location>
</feature>
<feature type="modified residue" description="Phosphoserine" evidence="3">
    <location>
        <position position="623"/>
    </location>
</feature>
<feature type="splice variant" id="VSP_012585" description="In isoform 3 and isoform 4." evidence="5">
    <original>MWTGGRRPGRLRRA</original>
    <variation>MGSHQSSQ</variation>
    <location>
        <begin position="1"/>
        <end position="14"/>
    </location>
</feature>
<feature type="splice variant" id="VSP_012586" description="In isoform 2 and isoform 4." evidence="5">
    <location>
        <begin position="24"/>
        <end position="53"/>
    </location>
</feature>
<accession>Q6R6L0</accession>
<accession>Q6R6L1</accession>
<accession>Q6R6L2</accession>
<accession>Q6R6L3</accession>
<sequence>MWTGGRRPGRLRRAASAADMEKLRLRSAWVPSCLGQSRNLQGRRARSSPSLWDSSLQEQKGELRKRLSYTTHRLEKLENEFDSTRHFLEIELRRAQEELEKVTEKLRRIQSNYMALQRINQELEDKLFRMGQHYEEEKRALSHEIVALNSHLLEAKVTIDKLSEDNELYRKDCSLAAQLLQCSQAYGRGRKMAELPAEFQERMNLHAEKPGCSLPAPPRRPAYADSVPPCVLAKVLEKPDPGSLSSHLSEASAQDLGFPEGLEKPGSRPPYKGDIYCSDTALYCPEARHQDRRPSVEGPGSDVGFLQAQNSTDSTAEEEEEEEEDTEAGAAAYPASYRHEAFGGYAASLPTSSSYSSFSAASEEKEHAQASTLTASQQAIYLNSRDELFGRKPAAAYGSSPRYAAAAAAVAAPLEAAMAPGFPRTVSPFPGEPFRFPLSPGPQPALMPPNLWNLRAKPGSARLVAGAGRGQWRPLSVDDIGAYPFPAAAAAPAPSLASPGGGFNDRYFGARGGPGDNAEGRASPLYASYKADSFSEGDDLSQGHLVEPRYLRAAGDLSLSPGHSADPLPSYAASEGDRERLGVQLLGASGSPEPELSLRSSRDSLEPSSMEASPEMHPGARLSPQPAFPRAGSSGLSRKDSLTKAQLYGTLLN</sequence>
<protein>
    <recommendedName>
        <fullName>Brain-enriched guanylate kinase-associated protein</fullName>
    </recommendedName>
</protein>
<evidence type="ECO:0000250" key="1"/>
<evidence type="ECO:0000250" key="2">
    <source>
        <dbReference type="UniProtKB" id="Q68EF6"/>
    </source>
</evidence>
<evidence type="ECO:0000250" key="3">
    <source>
        <dbReference type="UniProtKB" id="Q9BUH8"/>
    </source>
</evidence>
<evidence type="ECO:0000256" key="4">
    <source>
        <dbReference type="SAM" id="MobiDB-lite"/>
    </source>
</evidence>
<evidence type="ECO:0000303" key="5">
    <source ref="1"/>
</evidence>
<comment type="function">
    <text>May sustain the structure of the postsynaptic density (PSD).</text>
</comment>
<comment type="subunit">
    <text evidence="1">Interacts with DLG4 and DLGAP1 and forms a ternary complex.</text>
</comment>
<comment type="subcellular location">
    <subcellularLocation>
        <location evidence="1">Cytoplasm</location>
    </subcellularLocation>
    <subcellularLocation>
        <location evidence="1">Membrane</location>
        <topology evidence="1">Peripheral membrane protein</topology>
    </subcellularLocation>
</comment>
<comment type="alternative products">
    <event type="alternative splicing"/>
    <isoform>
        <id>Q6R6L0-1</id>
        <name>1</name>
        <name>BEGAIN-2B</name>
        <sequence type="displayed"/>
    </isoform>
    <isoform>
        <id>Q6R6L0-2</id>
        <name>2</name>
        <name>BEGAIN-2A</name>
        <sequence type="described" ref="VSP_012586"/>
    </isoform>
    <isoform>
        <id>Q6R6L0-3</id>
        <name>3</name>
        <name>BEGAIN-1B</name>
        <sequence type="described" ref="VSP_012585"/>
    </isoform>
    <isoform>
        <id>Q6R6L0-4</id>
        <name>4</name>
        <name>BEGAIN-1A</name>
        <sequence type="described" ref="VSP_012585 VSP_012586"/>
    </isoform>
</comment>
<reference key="1">
    <citation type="submission" date="2003-12" db="EMBL/GenBank/DDBJ databases">
        <title>BEGAIN: a novel imprinted gene that generates tissue-specific, paternally expressed transcripts using alternate promoters.</title>
        <authorList>
            <person name="Smit M.A."/>
            <person name="Tordoir X."/>
            <person name="Gyapay G."/>
            <person name="Cockett N.E."/>
            <person name="Georges M."/>
            <person name="Charlier C."/>
        </authorList>
    </citation>
    <scope>NUCLEOTIDE SEQUENCE [MRNA] (ISOFORMS 1; 2; 3 AND 4)</scope>
</reference>
<proteinExistence type="evidence at transcript level"/>
<dbReference type="EMBL" id="AY509922">
    <property type="protein sequence ID" value="AAR98700.1"/>
    <property type="molecule type" value="mRNA"/>
</dbReference>
<dbReference type="EMBL" id="AY509923">
    <property type="protein sequence ID" value="AAR98701.1"/>
    <property type="molecule type" value="mRNA"/>
</dbReference>
<dbReference type="EMBL" id="AY509924">
    <property type="protein sequence ID" value="AAR98702.1"/>
    <property type="molecule type" value="mRNA"/>
</dbReference>
<dbReference type="EMBL" id="AY509925">
    <property type="protein sequence ID" value="AAR98703.1"/>
    <property type="molecule type" value="mRNA"/>
</dbReference>
<dbReference type="RefSeq" id="NP_001009766.1">
    <molecule id="Q6R6L0-1"/>
    <property type="nucleotide sequence ID" value="NM_001009766.1"/>
</dbReference>
<dbReference type="SMR" id="Q6R6L0"/>
<dbReference type="GeneID" id="443287"/>
<dbReference type="KEGG" id="oas:443287"/>
<dbReference type="CTD" id="57596"/>
<dbReference type="eggNOG" id="ENOG502QUGW">
    <property type="taxonomic scope" value="Eukaryota"/>
</dbReference>
<dbReference type="OrthoDB" id="9217007at2759"/>
<dbReference type="Proteomes" id="UP000002356">
    <property type="component" value="Unplaced"/>
</dbReference>
<dbReference type="GO" id="GO:0005737">
    <property type="term" value="C:cytoplasm"/>
    <property type="evidence" value="ECO:0007669"/>
    <property type="project" value="UniProtKB-SubCell"/>
</dbReference>
<dbReference type="GO" id="GO:0016020">
    <property type="term" value="C:membrane"/>
    <property type="evidence" value="ECO:0007669"/>
    <property type="project" value="UniProtKB-SubCell"/>
</dbReference>
<dbReference type="GO" id="GO:0045202">
    <property type="term" value="C:synapse"/>
    <property type="evidence" value="ECO:0007669"/>
    <property type="project" value="TreeGrafter"/>
</dbReference>
<dbReference type="InterPro" id="IPR043441">
    <property type="entry name" value="Tjap1/BEGAIN"/>
</dbReference>
<dbReference type="PANTHER" id="PTHR28664:SF2">
    <property type="entry name" value="BRAIN-ENRICHED GUANYLATE KINASE-ASSOCIATED PROTEIN"/>
    <property type="match status" value="1"/>
</dbReference>
<dbReference type="PANTHER" id="PTHR28664">
    <property type="entry name" value="TIGHT JUNCTION-ASSOCIATED PROTEIN 1"/>
    <property type="match status" value="1"/>
</dbReference>
<gene>
    <name type="primary">BEGAIN</name>
</gene>
<organism>
    <name type="scientific">Ovis aries</name>
    <name type="common">Sheep</name>
    <dbReference type="NCBI Taxonomy" id="9940"/>
    <lineage>
        <taxon>Eukaryota</taxon>
        <taxon>Metazoa</taxon>
        <taxon>Chordata</taxon>
        <taxon>Craniata</taxon>
        <taxon>Vertebrata</taxon>
        <taxon>Euteleostomi</taxon>
        <taxon>Mammalia</taxon>
        <taxon>Eutheria</taxon>
        <taxon>Laurasiatheria</taxon>
        <taxon>Artiodactyla</taxon>
        <taxon>Ruminantia</taxon>
        <taxon>Pecora</taxon>
        <taxon>Bovidae</taxon>
        <taxon>Caprinae</taxon>
        <taxon>Ovis</taxon>
    </lineage>
</organism>
<name>BEGIN_SHEEP</name>
<keyword id="KW-0025">Alternative splicing</keyword>
<keyword id="KW-0963">Cytoplasm</keyword>
<keyword id="KW-0472">Membrane</keyword>
<keyword id="KW-0488">Methylation</keyword>
<keyword id="KW-0597">Phosphoprotein</keyword>
<keyword id="KW-1185">Reference proteome</keyword>